<gene>
    <name evidence="1" type="primary">ispE</name>
    <name type="ordered locus">Cyan7425_0570</name>
</gene>
<reference key="1">
    <citation type="journal article" date="2011" name="MBio">
        <title>Novel metabolic attributes of the genus Cyanothece, comprising a group of unicellular nitrogen-fixing Cyanobacteria.</title>
        <authorList>
            <person name="Bandyopadhyay A."/>
            <person name="Elvitigala T."/>
            <person name="Welsh E."/>
            <person name="Stockel J."/>
            <person name="Liberton M."/>
            <person name="Min H."/>
            <person name="Sherman L.A."/>
            <person name="Pakrasi H.B."/>
        </authorList>
    </citation>
    <scope>NUCLEOTIDE SEQUENCE [LARGE SCALE GENOMIC DNA]</scope>
    <source>
        <strain>PCC 7425 / ATCC 29141</strain>
    </source>
</reference>
<comment type="function">
    <text evidence="1">Catalyzes the phosphorylation of the position 2 hydroxy group of 4-diphosphocytidyl-2C-methyl-D-erythritol.</text>
</comment>
<comment type="catalytic activity">
    <reaction evidence="1">
        <text>4-CDP-2-C-methyl-D-erythritol + ATP = 4-CDP-2-C-methyl-D-erythritol 2-phosphate + ADP + H(+)</text>
        <dbReference type="Rhea" id="RHEA:18437"/>
        <dbReference type="ChEBI" id="CHEBI:15378"/>
        <dbReference type="ChEBI" id="CHEBI:30616"/>
        <dbReference type="ChEBI" id="CHEBI:57823"/>
        <dbReference type="ChEBI" id="CHEBI:57919"/>
        <dbReference type="ChEBI" id="CHEBI:456216"/>
        <dbReference type="EC" id="2.7.1.148"/>
    </reaction>
</comment>
<comment type="pathway">
    <text evidence="1">Isoprenoid biosynthesis; isopentenyl diphosphate biosynthesis via DXP pathway; isopentenyl diphosphate from 1-deoxy-D-xylulose 5-phosphate: step 3/6.</text>
</comment>
<comment type="similarity">
    <text evidence="1">Belongs to the GHMP kinase family. IspE subfamily.</text>
</comment>
<protein>
    <recommendedName>
        <fullName evidence="1">4-diphosphocytidyl-2-C-methyl-D-erythritol kinase</fullName>
        <shortName evidence="1">CMK</shortName>
        <ecNumber evidence="1">2.7.1.148</ecNumber>
    </recommendedName>
    <alternativeName>
        <fullName evidence="1">4-(cytidine-5'-diphospho)-2-C-methyl-D-erythritol kinase</fullName>
    </alternativeName>
</protein>
<name>ISPE_CYAP4</name>
<feature type="chain" id="PRO_1000190683" description="4-diphosphocytidyl-2-C-methyl-D-erythritol kinase">
    <location>
        <begin position="1"/>
        <end position="324"/>
    </location>
</feature>
<feature type="active site" evidence="1">
    <location>
        <position position="11"/>
    </location>
</feature>
<feature type="active site" evidence="1">
    <location>
        <position position="150"/>
    </location>
</feature>
<feature type="binding site" evidence="1">
    <location>
        <begin position="108"/>
        <end position="118"/>
    </location>
    <ligand>
        <name>ATP</name>
        <dbReference type="ChEBI" id="CHEBI:30616"/>
    </ligand>
</feature>
<proteinExistence type="inferred from homology"/>
<accession>B8HU41</accession>
<keyword id="KW-0067">ATP-binding</keyword>
<keyword id="KW-0414">Isoprene biosynthesis</keyword>
<keyword id="KW-0418">Kinase</keyword>
<keyword id="KW-0547">Nucleotide-binding</keyword>
<keyword id="KW-0808">Transferase</keyword>
<evidence type="ECO:0000255" key="1">
    <source>
        <dbReference type="HAMAP-Rule" id="MF_00061"/>
    </source>
</evidence>
<sequence length="324" mass="35268">MRAYTLIAPAKINLFLQIIGDHLQQDQPTGYHNLVMVLQSVSLSDELQLRPLSGEARSLRLDPPILLHCDHPQVPLDQTNLVYRAAALMWQKFPGQAGVEITLHKRIPIGAGLAGGSTDAAAVLVGLNLMWELGLTQLELQELGSQLGADVPFCIRGGTSLAVGRGDQLSPLPDLEGIYVVLGKYHDLSVSTPWAYQTYRQQFQASYAQTLEEQEQRRQQGGSGALLKAIAHRDGGQIGQLLHNDLEKVVLPAYPRVEYLRQQFANQSPLGTMMSGSGPTVFALADSAAAAEEIYAGVRGAIADPYLDLWICQLCNQGIQVQPL</sequence>
<dbReference type="EC" id="2.7.1.148" evidence="1"/>
<dbReference type="EMBL" id="CP001344">
    <property type="protein sequence ID" value="ACL42961.1"/>
    <property type="molecule type" value="Genomic_DNA"/>
</dbReference>
<dbReference type="SMR" id="B8HU41"/>
<dbReference type="STRING" id="395961.Cyan7425_0570"/>
<dbReference type="KEGG" id="cyn:Cyan7425_0570"/>
<dbReference type="eggNOG" id="COG1947">
    <property type="taxonomic scope" value="Bacteria"/>
</dbReference>
<dbReference type="HOGENOM" id="CLU_053057_1_1_3"/>
<dbReference type="OrthoDB" id="9809438at2"/>
<dbReference type="UniPathway" id="UPA00056">
    <property type="reaction ID" value="UER00094"/>
</dbReference>
<dbReference type="GO" id="GO:0050515">
    <property type="term" value="F:4-(cytidine 5'-diphospho)-2-C-methyl-D-erythritol kinase activity"/>
    <property type="evidence" value="ECO:0007669"/>
    <property type="project" value="UniProtKB-UniRule"/>
</dbReference>
<dbReference type="GO" id="GO:0005524">
    <property type="term" value="F:ATP binding"/>
    <property type="evidence" value="ECO:0007669"/>
    <property type="project" value="UniProtKB-UniRule"/>
</dbReference>
<dbReference type="GO" id="GO:0019288">
    <property type="term" value="P:isopentenyl diphosphate biosynthetic process, methylerythritol 4-phosphate pathway"/>
    <property type="evidence" value="ECO:0007669"/>
    <property type="project" value="UniProtKB-UniRule"/>
</dbReference>
<dbReference type="GO" id="GO:0016114">
    <property type="term" value="P:terpenoid biosynthetic process"/>
    <property type="evidence" value="ECO:0007669"/>
    <property type="project" value="InterPro"/>
</dbReference>
<dbReference type="Gene3D" id="3.30.230.10">
    <property type="match status" value="1"/>
</dbReference>
<dbReference type="Gene3D" id="3.30.70.890">
    <property type="entry name" value="GHMP kinase, C-terminal domain"/>
    <property type="match status" value="1"/>
</dbReference>
<dbReference type="HAMAP" id="MF_00061">
    <property type="entry name" value="IspE"/>
    <property type="match status" value="1"/>
</dbReference>
<dbReference type="InterPro" id="IPR013750">
    <property type="entry name" value="GHMP_kinase_C_dom"/>
</dbReference>
<dbReference type="InterPro" id="IPR036554">
    <property type="entry name" value="GHMP_kinase_C_sf"/>
</dbReference>
<dbReference type="InterPro" id="IPR006204">
    <property type="entry name" value="GHMP_kinase_N_dom"/>
</dbReference>
<dbReference type="InterPro" id="IPR004424">
    <property type="entry name" value="IspE"/>
</dbReference>
<dbReference type="InterPro" id="IPR020568">
    <property type="entry name" value="Ribosomal_Su5_D2-typ_SF"/>
</dbReference>
<dbReference type="InterPro" id="IPR014721">
    <property type="entry name" value="Ribsml_uS5_D2-typ_fold_subgr"/>
</dbReference>
<dbReference type="NCBIfam" id="TIGR00154">
    <property type="entry name" value="ispE"/>
    <property type="match status" value="1"/>
</dbReference>
<dbReference type="PANTHER" id="PTHR43527">
    <property type="entry name" value="4-DIPHOSPHOCYTIDYL-2-C-METHYL-D-ERYTHRITOL KINASE, CHLOROPLASTIC"/>
    <property type="match status" value="1"/>
</dbReference>
<dbReference type="PANTHER" id="PTHR43527:SF2">
    <property type="entry name" value="4-DIPHOSPHOCYTIDYL-2-C-METHYL-D-ERYTHRITOL KINASE, CHLOROPLASTIC"/>
    <property type="match status" value="1"/>
</dbReference>
<dbReference type="Pfam" id="PF08544">
    <property type="entry name" value="GHMP_kinases_C"/>
    <property type="match status" value="1"/>
</dbReference>
<dbReference type="Pfam" id="PF00288">
    <property type="entry name" value="GHMP_kinases_N"/>
    <property type="match status" value="1"/>
</dbReference>
<dbReference type="PIRSF" id="PIRSF010376">
    <property type="entry name" value="IspE"/>
    <property type="match status" value="1"/>
</dbReference>
<dbReference type="SUPFAM" id="SSF55060">
    <property type="entry name" value="GHMP Kinase, C-terminal domain"/>
    <property type="match status" value="1"/>
</dbReference>
<dbReference type="SUPFAM" id="SSF54211">
    <property type="entry name" value="Ribosomal protein S5 domain 2-like"/>
    <property type="match status" value="1"/>
</dbReference>
<organism>
    <name type="scientific">Cyanothece sp. (strain PCC 7425 / ATCC 29141)</name>
    <dbReference type="NCBI Taxonomy" id="395961"/>
    <lineage>
        <taxon>Bacteria</taxon>
        <taxon>Bacillati</taxon>
        <taxon>Cyanobacteriota</taxon>
        <taxon>Cyanophyceae</taxon>
        <taxon>Gomontiellales</taxon>
        <taxon>Cyanothecaceae</taxon>
        <taxon>Cyanothece</taxon>
    </lineage>
</organism>